<evidence type="ECO:0000250" key="1">
    <source>
        <dbReference type="UniProtKB" id="B9DFR3"/>
    </source>
</evidence>
<evidence type="ECO:0000250" key="2">
    <source>
        <dbReference type="UniProtKB" id="Q6P988"/>
    </source>
</evidence>
<evidence type="ECO:0000255" key="3"/>
<evidence type="ECO:0000255" key="4">
    <source>
        <dbReference type="PROSITE-ProRule" id="PRU00498"/>
    </source>
</evidence>
<evidence type="ECO:0000269" key="5">
    <source>
    </source>
</evidence>
<evidence type="ECO:0000269" key="6">
    <source>
    </source>
</evidence>
<evidence type="ECO:0000303" key="7">
    <source>
    </source>
</evidence>
<evidence type="ECO:0000305" key="8"/>
<evidence type="ECO:0000312" key="9">
    <source>
        <dbReference type="Araport" id="AT3G05910"/>
    </source>
</evidence>
<evidence type="ECO:0000312" key="10">
    <source>
        <dbReference type="EMBL" id="AAF23225.1"/>
    </source>
</evidence>
<evidence type="ECO:0000312" key="11">
    <source>
        <dbReference type="EMBL" id="AAF26093.1"/>
    </source>
</evidence>
<dbReference type="EC" id="3.1.1.-" evidence="8"/>
<dbReference type="EMBL" id="AC012393">
    <property type="protein sequence ID" value="AAF26093.1"/>
    <property type="status" value="ALT_SEQ"/>
    <property type="molecule type" value="Genomic_DNA"/>
</dbReference>
<dbReference type="EMBL" id="AC013454">
    <property type="protein sequence ID" value="AAF23225.1"/>
    <property type="molecule type" value="Genomic_DNA"/>
</dbReference>
<dbReference type="EMBL" id="CP002686">
    <property type="protein sequence ID" value="AEE74314.1"/>
    <property type="molecule type" value="Genomic_DNA"/>
</dbReference>
<dbReference type="EMBL" id="AF428303">
    <property type="protein sequence ID" value="AAL16135.1"/>
    <property type="molecule type" value="mRNA"/>
</dbReference>
<dbReference type="EMBL" id="AY050847">
    <property type="protein sequence ID" value="AAK92782.1"/>
    <property type="molecule type" value="mRNA"/>
</dbReference>
<dbReference type="EMBL" id="AY096751">
    <property type="protein sequence ID" value="AAM20385.1"/>
    <property type="molecule type" value="mRNA"/>
</dbReference>
<dbReference type="RefSeq" id="NP_566263.1">
    <molecule id="Q9SFF6-1"/>
    <property type="nucleotide sequence ID" value="NM_111465.5"/>
</dbReference>
<dbReference type="SMR" id="Q9SFF6"/>
<dbReference type="FunCoup" id="Q9SFF6">
    <property type="interactions" value="46"/>
</dbReference>
<dbReference type="STRING" id="3702.Q9SFF6"/>
<dbReference type="ESTHER" id="arath-Q9SFF6">
    <property type="family name" value="Pectinacetylesterase-Notum"/>
</dbReference>
<dbReference type="GlyCosmos" id="Q9SFF6">
    <property type="glycosylation" value="1 site, No reported glycans"/>
</dbReference>
<dbReference type="GlyGen" id="Q9SFF6">
    <property type="glycosylation" value="2 sites"/>
</dbReference>
<dbReference type="iPTMnet" id="Q9SFF6"/>
<dbReference type="PaxDb" id="3702-AT3G05910.1"/>
<dbReference type="ProteomicsDB" id="248886">
    <molecule id="Q9SFF6-1"/>
</dbReference>
<dbReference type="EnsemblPlants" id="AT3G05910.1">
    <molecule id="Q9SFF6-1"/>
    <property type="protein sequence ID" value="AT3G05910.1"/>
    <property type="gene ID" value="AT3G05910"/>
</dbReference>
<dbReference type="GeneID" id="819760"/>
<dbReference type="Gramene" id="AT3G05910.1">
    <molecule id="Q9SFF6-1"/>
    <property type="protein sequence ID" value="AT3G05910.1"/>
    <property type="gene ID" value="AT3G05910"/>
</dbReference>
<dbReference type="KEGG" id="ath:AT3G05910"/>
<dbReference type="Araport" id="AT3G05910"/>
<dbReference type="TAIR" id="AT3G05910">
    <property type="gene designation" value="ATPAE12"/>
</dbReference>
<dbReference type="eggNOG" id="KOG4287">
    <property type="taxonomic scope" value="Eukaryota"/>
</dbReference>
<dbReference type="HOGENOM" id="CLU_031008_0_0_1"/>
<dbReference type="InParanoid" id="Q9SFF6"/>
<dbReference type="OMA" id="MEREIVF"/>
<dbReference type="PhylomeDB" id="Q9SFF6"/>
<dbReference type="PRO" id="PR:Q9SFF6"/>
<dbReference type="Proteomes" id="UP000006548">
    <property type="component" value="Chromosome 3"/>
</dbReference>
<dbReference type="ExpressionAtlas" id="Q9SFF6">
    <property type="expression patterns" value="baseline and differential"/>
</dbReference>
<dbReference type="GO" id="GO:0005576">
    <property type="term" value="C:extracellular region"/>
    <property type="evidence" value="ECO:0007669"/>
    <property type="project" value="UniProtKB-KW"/>
</dbReference>
<dbReference type="GO" id="GO:0016787">
    <property type="term" value="F:hydrolase activity"/>
    <property type="evidence" value="ECO:0007669"/>
    <property type="project" value="UniProtKB-KW"/>
</dbReference>
<dbReference type="GO" id="GO:0071555">
    <property type="term" value="P:cell wall organization"/>
    <property type="evidence" value="ECO:0007669"/>
    <property type="project" value="UniProtKB-KW"/>
</dbReference>
<dbReference type="InterPro" id="IPR004963">
    <property type="entry name" value="PAE/NOTUM"/>
</dbReference>
<dbReference type="PANTHER" id="PTHR21562">
    <property type="entry name" value="NOTUM-RELATED"/>
    <property type="match status" value="1"/>
</dbReference>
<dbReference type="PANTHER" id="PTHR21562:SF5">
    <property type="entry name" value="PECTIN ACETYLESTERASE 12"/>
    <property type="match status" value="1"/>
</dbReference>
<dbReference type="Pfam" id="PF03283">
    <property type="entry name" value="PAE"/>
    <property type="match status" value="1"/>
</dbReference>
<sequence length="415" mass="46327">MVKLLLVGFVVAGIILGTQANEYLDFNVTEIDRIEELEFGFSKYSSNLNPLMVGLTLIRGADSGAVCLDGTLPGYHLHRGHGSGANSWLIQLEGGGWCNNIRTCVYRKTTRRGSSNYMEKQLQFTGILSDKAQENPDFFNWNRVKLRYCDGASFSGDGQNQAAQLQFRGERIWRAAIDDLKANGMRYANQALLSGCSAGGLAAILRCDEFRNLFPGSTKVKCLSDAGLFLDTADVSGGRTIRNLYNGVVELQSVKNNLPRICTNHLDPTSCFFPQNLISQMKTPLFIVNAAYDTWQIQSSIAPTSADPSGFWHDCRLNHGKCTPAQLRFLQGFREQMLRVVKGFSMSRQNGLFINSCFAHCQTERQDTWFADDSPVIRKKAVAIAVGDWYFDRAEVKLVDCPYPCDKSCHNLVFR</sequence>
<reference key="1">
    <citation type="journal article" date="2000" name="Nature">
        <title>Sequence and analysis of chromosome 3 of the plant Arabidopsis thaliana.</title>
        <authorList>
            <person name="Salanoubat M."/>
            <person name="Lemcke K."/>
            <person name="Rieger M."/>
            <person name="Ansorge W."/>
            <person name="Unseld M."/>
            <person name="Fartmann B."/>
            <person name="Valle G."/>
            <person name="Bloecker H."/>
            <person name="Perez-Alonso M."/>
            <person name="Obermaier B."/>
            <person name="Delseny M."/>
            <person name="Boutry M."/>
            <person name="Grivell L.A."/>
            <person name="Mache R."/>
            <person name="Puigdomenech P."/>
            <person name="De Simone V."/>
            <person name="Choisne N."/>
            <person name="Artiguenave F."/>
            <person name="Robert C."/>
            <person name="Brottier P."/>
            <person name="Wincker P."/>
            <person name="Cattolico L."/>
            <person name="Weissenbach J."/>
            <person name="Saurin W."/>
            <person name="Quetier F."/>
            <person name="Schaefer M."/>
            <person name="Mueller-Auer S."/>
            <person name="Gabel C."/>
            <person name="Fuchs M."/>
            <person name="Benes V."/>
            <person name="Wurmbach E."/>
            <person name="Drzonek H."/>
            <person name="Erfle H."/>
            <person name="Jordan N."/>
            <person name="Bangert S."/>
            <person name="Wiedelmann R."/>
            <person name="Kranz H."/>
            <person name="Voss H."/>
            <person name="Holland R."/>
            <person name="Brandt P."/>
            <person name="Nyakatura G."/>
            <person name="Vezzi A."/>
            <person name="D'Angelo M."/>
            <person name="Pallavicini A."/>
            <person name="Toppo S."/>
            <person name="Simionati B."/>
            <person name="Conrad A."/>
            <person name="Hornischer K."/>
            <person name="Kauer G."/>
            <person name="Loehnert T.-H."/>
            <person name="Nordsiek G."/>
            <person name="Reichelt J."/>
            <person name="Scharfe M."/>
            <person name="Schoen O."/>
            <person name="Bargues M."/>
            <person name="Terol J."/>
            <person name="Climent J."/>
            <person name="Navarro P."/>
            <person name="Collado C."/>
            <person name="Perez-Perez A."/>
            <person name="Ottenwaelder B."/>
            <person name="Duchemin D."/>
            <person name="Cooke R."/>
            <person name="Laudie M."/>
            <person name="Berger-Llauro C."/>
            <person name="Purnelle B."/>
            <person name="Masuy D."/>
            <person name="de Haan M."/>
            <person name="Maarse A.C."/>
            <person name="Alcaraz J.-P."/>
            <person name="Cottet A."/>
            <person name="Casacuberta E."/>
            <person name="Monfort A."/>
            <person name="Argiriou A."/>
            <person name="Flores M."/>
            <person name="Liguori R."/>
            <person name="Vitale D."/>
            <person name="Mannhaupt G."/>
            <person name="Haase D."/>
            <person name="Schoof H."/>
            <person name="Rudd S."/>
            <person name="Zaccaria P."/>
            <person name="Mewes H.-W."/>
            <person name="Mayer K.F.X."/>
            <person name="Kaul S."/>
            <person name="Town C.D."/>
            <person name="Koo H.L."/>
            <person name="Tallon L.J."/>
            <person name="Jenkins J."/>
            <person name="Rooney T."/>
            <person name="Rizzo M."/>
            <person name="Walts A."/>
            <person name="Utterback T."/>
            <person name="Fujii C.Y."/>
            <person name="Shea T.P."/>
            <person name="Creasy T.H."/>
            <person name="Haas B."/>
            <person name="Maiti R."/>
            <person name="Wu D."/>
            <person name="Peterson J."/>
            <person name="Van Aken S."/>
            <person name="Pai G."/>
            <person name="Militscher J."/>
            <person name="Sellers P."/>
            <person name="Gill J.E."/>
            <person name="Feldblyum T.V."/>
            <person name="Preuss D."/>
            <person name="Lin X."/>
            <person name="Nierman W.C."/>
            <person name="Salzberg S.L."/>
            <person name="White O."/>
            <person name="Venter J.C."/>
            <person name="Fraser C.M."/>
            <person name="Kaneko T."/>
            <person name="Nakamura Y."/>
            <person name="Sato S."/>
            <person name="Kato T."/>
            <person name="Asamizu E."/>
            <person name="Sasamoto S."/>
            <person name="Kimura T."/>
            <person name="Idesawa K."/>
            <person name="Kawashima K."/>
            <person name="Kishida Y."/>
            <person name="Kiyokawa C."/>
            <person name="Kohara M."/>
            <person name="Matsumoto M."/>
            <person name="Matsuno A."/>
            <person name="Muraki A."/>
            <person name="Nakayama S."/>
            <person name="Nakazaki N."/>
            <person name="Shinpo S."/>
            <person name="Takeuchi C."/>
            <person name="Wada T."/>
            <person name="Watanabe A."/>
            <person name="Yamada M."/>
            <person name="Yasuda M."/>
            <person name="Tabata S."/>
        </authorList>
    </citation>
    <scope>NUCLEOTIDE SEQUENCE [LARGE SCALE GENOMIC DNA]</scope>
    <source>
        <strain>cv. Columbia</strain>
    </source>
</reference>
<reference key="2">
    <citation type="journal article" date="2017" name="Plant J.">
        <title>Araport11: a complete reannotation of the Arabidopsis thaliana reference genome.</title>
        <authorList>
            <person name="Cheng C.Y."/>
            <person name="Krishnakumar V."/>
            <person name="Chan A.P."/>
            <person name="Thibaud-Nissen F."/>
            <person name="Schobel S."/>
            <person name="Town C.D."/>
        </authorList>
    </citation>
    <scope>GENOME REANNOTATION</scope>
    <source>
        <strain>cv. Columbia</strain>
    </source>
</reference>
<reference key="3">
    <citation type="journal article" date="2002" name="Mol. Plant Microbe Interact.">
        <title>An Arabidopsis thaliana pectin acetylesterase gene is upregulated in nematode feeding sites induced by root-knot and cyst nematodes.</title>
        <authorList>
            <person name="Vercauteren I."/>
            <person name="de Almeida Engler J."/>
            <person name="De Groodt R."/>
            <person name="Gheysen G."/>
        </authorList>
    </citation>
    <scope>INDUCTION</scope>
</reference>
<reference key="4">
    <citation type="journal article" date="2014" name="Planta">
        <title>Identification and functional characterization of the distinct plant pectin esterases PAE8 and PAE9 and their deletion mutants.</title>
        <authorList>
            <person name="de Souza A."/>
            <person name="Hull P.A."/>
            <person name="Gille S."/>
            <person name="Pauly M."/>
        </authorList>
    </citation>
    <scope>GENE FAMILY</scope>
    <scope>DISRUPTION PHENOTYPE</scope>
</reference>
<name>PAE12_ARATH</name>
<gene>
    <name evidence="7" type="primary">PAE12</name>
    <name evidence="9" type="ordered locus">At3g05910</name>
    <name evidence="11" type="ORF">F10A16.21</name>
    <name evidence="10" type="ORF">F2O10.13</name>
</gene>
<protein>
    <recommendedName>
        <fullName evidence="7">Pectin acetylesterase 12</fullName>
        <ecNumber evidence="8">3.1.1.-</ecNumber>
    </recommendedName>
</protein>
<organism>
    <name type="scientific">Arabidopsis thaliana</name>
    <name type="common">Mouse-ear cress</name>
    <dbReference type="NCBI Taxonomy" id="3702"/>
    <lineage>
        <taxon>Eukaryota</taxon>
        <taxon>Viridiplantae</taxon>
        <taxon>Streptophyta</taxon>
        <taxon>Embryophyta</taxon>
        <taxon>Tracheophyta</taxon>
        <taxon>Spermatophyta</taxon>
        <taxon>Magnoliopsida</taxon>
        <taxon>eudicotyledons</taxon>
        <taxon>Gunneridae</taxon>
        <taxon>Pentapetalae</taxon>
        <taxon>rosids</taxon>
        <taxon>malvids</taxon>
        <taxon>Brassicales</taxon>
        <taxon>Brassicaceae</taxon>
        <taxon>Camelineae</taxon>
        <taxon>Arabidopsis</taxon>
    </lineage>
</organism>
<accession>Q9SFF6</accession>
<accession>Q9M9K8</accession>
<comment type="function">
    <text evidence="1">Hydrolyzes acetyl esters in homogalacturonan regions of pectin. In type I primary cell wall, galacturonic acid residues of pectin can be acetylated at the O-2 and O-3 positions. Decreasing the degree of acetylation of pectin gels in vitro alters their physical properties.</text>
</comment>
<comment type="subcellular location">
    <subcellularLocation>
        <location evidence="8">Secreted</location>
        <location evidence="8">Cell wall</location>
    </subcellularLocation>
</comment>
<comment type="alternative products">
    <event type="alternative splicing"/>
    <isoform>
        <id>Q9SFF6-1</id>
        <name>1</name>
        <sequence type="displayed"/>
    </isoform>
    <text evidence="8">A number of isoforms are produced. According to EST sequences.</text>
</comment>
<comment type="induction">
    <text evidence="5">In roots by the parasitic nematodes Heterodera schachtii and Meloidogyne incognita.</text>
</comment>
<comment type="disruption phenotype">
    <text evidence="6">No visible phenotype under normal growth conditions.</text>
</comment>
<comment type="similarity">
    <text evidence="8">Belongs to the pectinacetylesterase family.</text>
</comment>
<comment type="sequence caution" evidence="8">
    <conflict type="erroneous gene model prediction">
        <sequence resource="EMBL-CDS" id="AAF26093"/>
    </conflict>
</comment>
<feature type="signal peptide" evidence="3">
    <location>
        <begin position="1"/>
        <end position="20"/>
    </location>
</feature>
<feature type="chain" id="PRO_0000431777" description="Pectin acetylesterase 12" evidence="3">
    <location>
        <begin position="21"/>
        <end position="415"/>
    </location>
</feature>
<feature type="active site" description="Charge relay system" evidence="2">
    <location>
        <position position="197"/>
    </location>
</feature>
<feature type="active site" description="Charge relay system" evidence="2">
    <location>
        <position position="293"/>
    </location>
</feature>
<feature type="active site" description="Charge relay system" evidence="2">
    <location>
        <position position="360"/>
    </location>
</feature>
<feature type="glycosylation site" description="N-linked (GlcNAc...) asparagine" evidence="4">
    <location>
        <position position="27"/>
    </location>
</feature>
<keyword id="KW-0025">Alternative splicing</keyword>
<keyword id="KW-0134">Cell wall</keyword>
<keyword id="KW-0961">Cell wall biogenesis/degradation</keyword>
<keyword id="KW-0325">Glycoprotein</keyword>
<keyword id="KW-0378">Hydrolase</keyword>
<keyword id="KW-1185">Reference proteome</keyword>
<keyword id="KW-0964">Secreted</keyword>
<keyword id="KW-0732">Signal</keyword>
<proteinExistence type="evidence at transcript level"/>